<proteinExistence type="inferred from homology"/>
<comment type="function">
    <text evidence="1">The heterodimer acts as both an ATP-dependent DNA helicase and an ATP-dependent, dual-direction single-stranded exonuclease. Recognizes the chi site generating a DNA molecule suitable for the initiation of homologous recombination. The AddA nuclease domain is required for chi fragment generation; this subunit has the helicase and 3' -&gt; 5' nuclease activities.</text>
</comment>
<comment type="catalytic activity">
    <reaction evidence="1">
        <text>Couples ATP hydrolysis with the unwinding of duplex DNA by translocating in the 3'-5' direction.</text>
        <dbReference type="EC" id="5.6.2.4"/>
    </reaction>
</comment>
<comment type="catalytic activity">
    <reaction evidence="1">
        <text>ATP + H2O = ADP + phosphate + H(+)</text>
        <dbReference type="Rhea" id="RHEA:13065"/>
        <dbReference type="ChEBI" id="CHEBI:15377"/>
        <dbReference type="ChEBI" id="CHEBI:15378"/>
        <dbReference type="ChEBI" id="CHEBI:30616"/>
        <dbReference type="ChEBI" id="CHEBI:43474"/>
        <dbReference type="ChEBI" id="CHEBI:456216"/>
        <dbReference type="EC" id="5.6.2.4"/>
    </reaction>
</comment>
<comment type="cofactor">
    <cofactor evidence="1">
        <name>Mg(2+)</name>
        <dbReference type="ChEBI" id="CHEBI:18420"/>
    </cofactor>
</comment>
<comment type="subunit">
    <text evidence="1">Heterodimer of AddA and AddB/RexB.</text>
</comment>
<comment type="similarity">
    <text evidence="1">Belongs to the helicase family. AddA subfamily.</text>
</comment>
<dbReference type="EC" id="3.1.-.-" evidence="1"/>
<dbReference type="EC" id="5.6.2.4" evidence="1"/>
<dbReference type="EMBL" id="CP000560">
    <property type="protein sequence ID" value="ABS73444.1"/>
    <property type="molecule type" value="Genomic_DNA"/>
</dbReference>
<dbReference type="SMR" id="A7Z368"/>
<dbReference type="KEGG" id="bay:RBAM_010800"/>
<dbReference type="HOGENOM" id="CLU_001114_3_1_9"/>
<dbReference type="Proteomes" id="UP000001120">
    <property type="component" value="Chromosome"/>
</dbReference>
<dbReference type="GO" id="GO:0005829">
    <property type="term" value="C:cytosol"/>
    <property type="evidence" value="ECO:0007669"/>
    <property type="project" value="TreeGrafter"/>
</dbReference>
<dbReference type="GO" id="GO:0033202">
    <property type="term" value="C:DNA helicase complex"/>
    <property type="evidence" value="ECO:0007669"/>
    <property type="project" value="TreeGrafter"/>
</dbReference>
<dbReference type="GO" id="GO:0043138">
    <property type="term" value="F:3'-5' DNA helicase activity"/>
    <property type="evidence" value="ECO:0007669"/>
    <property type="project" value="UniProtKB-UniRule"/>
</dbReference>
<dbReference type="GO" id="GO:0008408">
    <property type="term" value="F:3'-5' exonuclease activity"/>
    <property type="evidence" value="ECO:0007669"/>
    <property type="project" value="UniProtKB-UniRule"/>
</dbReference>
<dbReference type="GO" id="GO:0005524">
    <property type="term" value="F:ATP binding"/>
    <property type="evidence" value="ECO:0007669"/>
    <property type="project" value="UniProtKB-UniRule"/>
</dbReference>
<dbReference type="GO" id="GO:0016887">
    <property type="term" value="F:ATP hydrolysis activity"/>
    <property type="evidence" value="ECO:0007669"/>
    <property type="project" value="RHEA"/>
</dbReference>
<dbReference type="GO" id="GO:0003690">
    <property type="term" value="F:double-stranded DNA binding"/>
    <property type="evidence" value="ECO:0007669"/>
    <property type="project" value="UniProtKB-UniRule"/>
</dbReference>
<dbReference type="GO" id="GO:0000724">
    <property type="term" value="P:double-strand break repair via homologous recombination"/>
    <property type="evidence" value="ECO:0007669"/>
    <property type="project" value="UniProtKB-UniRule"/>
</dbReference>
<dbReference type="CDD" id="cd17932">
    <property type="entry name" value="DEXQc_UvrD"/>
    <property type="match status" value="1"/>
</dbReference>
<dbReference type="CDD" id="cd18807">
    <property type="entry name" value="SF1_C_UvrD"/>
    <property type="match status" value="1"/>
</dbReference>
<dbReference type="FunFam" id="3.40.50.300:FF:001187">
    <property type="entry name" value="ATP-dependent helicase/nuclease subunit A"/>
    <property type="match status" value="1"/>
</dbReference>
<dbReference type="FunFam" id="3.40.50.300:FF:001196">
    <property type="entry name" value="ATP-dependent helicase/nuclease subunit A"/>
    <property type="match status" value="1"/>
</dbReference>
<dbReference type="FunFam" id="3.40.50.300:FF:001236">
    <property type="entry name" value="ATP-dependent helicase/nuclease subunit A"/>
    <property type="match status" value="1"/>
</dbReference>
<dbReference type="Gene3D" id="3.90.320.10">
    <property type="match status" value="1"/>
</dbReference>
<dbReference type="Gene3D" id="6.10.250.2380">
    <property type="match status" value="1"/>
</dbReference>
<dbReference type="Gene3D" id="3.40.50.300">
    <property type="entry name" value="P-loop containing nucleotide triphosphate hydrolases"/>
    <property type="match status" value="4"/>
</dbReference>
<dbReference type="HAMAP" id="MF_01451">
    <property type="entry name" value="AddA"/>
    <property type="match status" value="1"/>
</dbReference>
<dbReference type="InterPro" id="IPR014152">
    <property type="entry name" value="AddA"/>
</dbReference>
<dbReference type="InterPro" id="IPR014017">
    <property type="entry name" value="DNA_helicase_UvrD-like_C"/>
</dbReference>
<dbReference type="InterPro" id="IPR000212">
    <property type="entry name" value="DNA_helicase_UvrD/REP"/>
</dbReference>
<dbReference type="InterPro" id="IPR027417">
    <property type="entry name" value="P-loop_NTPase"/>
</dbReference>
<dbReference type="InterPro" id="IPR011604">
    <property type="entry name" value="PDDEXK-like_dom_sf"/>
</dbReference>
<dbReference type="InterPro" id="IPR038726">
    <property type="entry name" value="PDDEXK_AddAB-type"/>
</dbReference>
<dbReference type="InterPro" id="IPR011335">
    <property type="entry name" value="Restrct_endonuc-II-like"/>
</dbReference>
<dbReference type="InterPro" id="IPR014016">
    <property type="entry name" value="UvrD-like_ATP-bd"/>
</dbReference>
<dbReference type="NCBIfam" id="TIGR02785">
    <property type="entry name" value="addA_Gpos"/>
    <property type="match status" value="1"/>
</dbReference>
<dbReference type="PANTHER" id="PTHR11070:SF48">
    <property type="entry name" value="ATP-DEPENDENT HELICASE_NUCLEASE SUBUNIT A"/>
    <property type="match status" value="1"/>
</dbReference>
<dbReference type="PANTHER" id="PTHR11070">
    <property type="entry name" value="UVRD / RECB / PCRA DNA HELICASE FAMILY MEMBER"/>
    <property type="match status" value="1"/>
</dbReference>
<dbReference type="Pfam" id="PF12705">
    <property type="entry name" value="PDDEXK_1"/>
    <property type="match status" value="1"/>
</dbReference>
<dbReference type="Pfam" id="PF00580">
    <property type="entry name" value="UvrD-helicase"/>
    <property type="match status" value="1"/>
</dbReference>
<dbReference type="Pfam" id="PF13361">
    <property type="entry name" value="UvrD_C"/>
    <property type="match status" value="1"/>
</dbReference>
<dbReference type="SUPFAM" id="SSF52540">
    <property type="entry name" value="P-loop containing nucleoside triphosphate hydrolases"/>
    <property type="match status" value="1"/>
</dbReference>
<dbReference type="SUPFAM" id="SSF52980">
    <property type="entry name" value="Restriction endonuclease-like"/>
    <property type="match status" value="1"/>
</dbReference>
<dbReference type="PROSITE" id="PS51198">
    <property type="entry name" value="UVRD_HELICASE_ATP_BIND"/>
    <property type="match status" value="1"/>
</dbReference>
<dbReference type="PROSITE" id="PS51217">
    <property type="entry name" value="UVRD_HELICASE_CTER"/>
    <property type="match status" value="1"/>
</dbReference>
<name>ADDA_BACVZ</name>
<accession>A7Z368</accession>
<reference key="1">
    <citation type="journal article" date="2007" name="Nat. Biotechnol.">
        <title>Comparative analysis of the complete genome sequence of the plant growth-promoting bacterium Bacillus amyloliquefaciens FZB42.</title>
        <authorList>
            <person name="Chen X.H."/>
            <person name="Koumoutsi A."/>
            <person name="Scholz R."/>
            <person name="Eisenreich A."/>
            <person name="Schneider K."/>
            <person name="Heinemeyer I."/>
            <person name="Morgenstern B."/>
            <person name="Voss B."/>
            <person name="Hess W.R."/>
            <person name="Reva O."/>
            <person name="Junge H."/>
            <person name="Voigt B."/>
            <person name="Jungblut P.R."/>
            <person name="Vater J."/>
            <person name="Suessmuth R."/>
            <person name="Liesegang H."/>
            <person name="Strittmatter A."/>
            <person name="Gottschalk G."/>
            <person name="Borriss R."/>
        </authorList>
    </citation>
    <scope>NUCLEOTIDE SEQUENCE [LARGE SCALE GENOMIC DNA]</scope>
    <source>
        <strain>DSM 23117 / BGSC 10A6 / LMG 26770 / FZB42</strain>
    </source>
</reference>
<organism>
    <name type="scientific">Bacillus velezensis (strain DSM 23117 / BGSC 10A6 / LMG 26770 / FZB42)</name>
    <name type="common">Bacillus amyloliquefaciens subsp. plantarum</name>
    <dbReference type="NCBI Taxonomy" id="326423"/>
    <lineage>
        <taxon>Bacteria</taxon>
        <taxon>Bacillati</taxon>
        <taxon>Bacillota</taxon>
        <taxon>Bacilli</taxon>
        <taxon>Bacillales</taxon>
        <taxon>Bacillaceae</taxon>
        <taxon>Bacillus</taxon>
        <taxon>Bacillus amyloliquefaciens group</taxon>
    </lineage>
</organism>
<keyword id="KW-0067">ATP-binding</keyword>
<keyword id="KW-0227">DNA damage</keyword>
<keyword id="KW-0234">DNA repair</keyword>
<keyword id="KW-0238">DNA-binding</keyword>
<keyword id="KW-0269">Exonuclease</keyword>
<keyword id="KW-0347">Helicase</keyword>
<keyword id="KW-0378">Hydrolase</keyword>
<keyword id="KW-0413">Isomerase</keyword>
<keyword id="KW-0540">Nuclease</keyword>
<keyword id="KW-0547">Nucleotide-binding</keyword>
<gene>
    <name evidence="1" type="primary">addA</name>
    <name type="ordered locus">RBAM_010800</name>
</gene>
<protein>
    <recommendedName>
        <fullName evidence="1">ATP-dependent helicase/nuclease subunit A</fullName>
        <ecNumber evidence="1">3.1.-.-</ecNumber>
        <ecNumber evidence="1">5.6.2.4</ecNumber>
    </recommendedName>
    <alternativeName>
        <fullName evidence="1">ATP-dependent helicase/nuclease AddA</fullName>
    </alternativeName>
    <alternativeName>
        <fullName evidence="1">DNA 3'-5' helicase AddA</fullName>
    </alternativeName>
</protein>
<feature type="chain" id="PRO_0000379230" description="ATP-dependent helicase/nuclease subunit A">
    <location>
        <begin position="1"/>
        <end position="1235"/>
    </location>
</feature>
<feature type="domain" description="UvrD-like helicase ATP-binding" evidence="1">
    <location>
        <begin position="10"/>
        <end position="482"/>
    </location>
</feature>
<feature type="domain" description="UvrD-like helicase C-terminal" evidence="1">
    <location>
        <begin position="509"/>
        <end position="799"/>
    </location>
</feature>
<feature type="binding site" evidence="1">
    <location>
        <begin position="31"/>
        <end position="38"/>
    </location>
    <ligand>
        <name>ATP</name>
        <dbReference type="ChEBI" id="CHEBI:30616"/>
    </ligand>
</feature>
<evidence type="ECO:0000255" key="1">
    <source>
        <dbReference type="HAMAP-Rule" id="MF_01451"/>
    </source>
</evidence>
<sequence length="1235" mass="141321">MMQIPKPKDSIWTDDQWSAIVSSGRDILVAAAAGSGKTAVLVERMIRKITAEEDPVDVDRLLVVTFTNASAAEMKHRIAEALEKELAKNPGSLHIRRQLSLLNRASISTLHSFCLQVLKKYYYMIDLDPGFRMADQTEGELLGDEVLDELFEDEYAKGNQAFFELADRYTTDRHDLDLQDLVKRVYEYSRSHPDPEVWLQSFVRLYDVTEESKMEELPFYQYVKEDAEMALFGAKQKLEKALELTKAPGGPAPRADNFLDDLQQIEELISCRHDFDALYERVPAVSFKRAKAVKGDEFDKALLDEATDLRNGAKKLIEKVKTDYFTRSPQDHLKSLADMKPVIETLVQLVISYGKRFEAAKQEKSIIDFSDLEHYCLAILTAVDEEGRRVPSEAAVYYQDQFHEVLVDEYQDTNLVQESILQLVKSGNEEAGNLFMVGDVKQSIYRFRLAEPLLFLGKYKRFTESGAGAGQKIDLNQNFRSRSDILDSTNFLFKQLMGGKIGEVDYDEQAALKLGASYPPNDAAKTELLLIDSADGADSSEDAEDFETVHWEAKAIAGEIRKLVSSPFKVYDGKTKTHRNIQYRDIVILLRSMPWAPQLMEELKNQGIPVYANLTSGYFEAVEVAAALSVLKVIDNPYQDIPLASVLRSPIVGCDENELALIRLEKKKAPFYEALKAYLANADRHDELYQKLRTFYDSLQKWRSFSTNHSVSELIWEVYRDTGYFDYAGGMPGGKQRQANLRVLYDRARSYEATAFRGLFRFLRFIERMQERGDDLGTARALSEQEDVVRLMTIHSSKGLEFPVVFTAGLGRSFNMMDLNKSYLLDKELGFGTKYIHPELRISYPTLPLVAMKKKMRRELLSEELRVLYVALTRAKEKLFLVGSCKNREKQLAKWQAQADRADWLLSEFDRYQASSYLDFIGPALIRHRDMEAHRTPGLSSSEDIARDPSRFHIRMLQQSELLEENPKERAEEKSKRLKAIQQGEPIPDSFSFDDQARRLLEWEYPYRELTAIRTKQSVSELKRKQEYEDEYSGRSLIKPSGDTLLYRRPGFMMKKGLTAAEKGTAMHTVMQHIPLTHVPTAEEAERTVRMLYEKELLTEEQQEAIDIEEIVQFFGTEIGKDLLRALRIDREVPFSMALPAGEVYKDAETAGEPLLVQGIIDCLYETADGLYLLDYKTDRIEGKFRNGFEGAAPILQKRYETQIELYTKAVEQITKTKVKGRALYFFDGGHVLTL</sequence>